<organism>
    <name type="scientific">Escherichia coli (strain 55989 / EAEC)</name>
    <dbReference type="NCBI Taxonomy" id="585055"/>
    <lineage>
        <taxon>Bacteria</taxon>
        <taxon>Pseudomonadati</taxon>
        <taxon>Pseudomonadota</taxon>
        <taxon>Gammaproteobacteria</taxon>
        <taxon>Enterobacterales</taxon>
        <taxon>Enterobacteriaceae</taxon>
        <taxon>Escherichia</taxon>
    </lineage>
</organism>
<accession>B7LFX0</accession>
<reference key="1">
    <citation type="journal article" date="2009" name="PLoS Genet.">
        <title>Organised genome dynamics in the Escherichia coli species results in highly diverse adaptive paths.</title>
        <authorList>
            <person name="Touchon M."/>
            <person name="Hoede C."/>
            <person name="Tenaillon O."/>
            <person name="Barbe V."/>
            <person name="Baeriswyl S."/>
            <person name="Bidet P."/>
            <person name="Bingen E."/>
            <person name="Bonacorsi S."/>
            <person name="Bouchier C."/>
            <person name="Bouvet O."/>
            <person name="Calteau A."/>
            <person name="Chiapello H."/>
            <person name="Clermont O."/>
            <person name="Cruveiller S."/>
            <person name="Danchin A."/>
            <person name="Diard M."/>
            <person name="Dossat C."/>
            <person name="Karoui M.E."/>
            <person name="Frapy E."/>
            <person name="Garry L."/>
            <person name="Ghigo J.M."/>
            <person name="Gilles A.M."/>
            <person name="Johnson J."/>
            <person name="Le Bouguenec C."/>
            <person name="Lescat M."/>
            <person name="Mangenot S."/>
            <person name="Martinez-Jehanne V."/>
            <person name="Matic I."/>
            <person name="Nassif X."/>
            <person name="Oztas S."/>
            <person name="Petit M.A."/>
            <person name="Pichon C."/>
            <person name="Rouy Z."/>
            <person name="Ruf C.S."/>
            <person name="Schneider D."/>
            <person name="Tourret J."/>
            <person name="Vacherie B."/>
            <person name="Vallenet D."/>
            <person name="Medigue C."/>
            <person name="Rocha E.P.C."/>
            <person name="Denamur E."/>
        </authorList>
    </citation>
    <scope>NUCLEOTIDE SEQUENCE [LARGE SCALE GENOMIC DNA]</scope>
    <source>
        <strain>55989 / EAEC</strain>
    </source>
</reference>
<gene>
    <name evidence="1" type="primary">zapD</name>
    <name type="ordered locus">EC55989_0096</name>
</gene>
<comment type="function">
    <text evidence="1">Cell division factor that enhances FtsZ-ring assembly. Directly interacts with FtsZ and promotes bundling of FtsZ protofilaments, with a reduction in FtsZ GTPase activity.</text>
</comment>
<comment type="subunit">
    <text evidence="1">Interacts with FtsZ.</text>
</comment>
<comment type="subcellular location">
    <subcellularLocation>
        <location evidence="1">Cytoplasm</location>
    </subcellularLocation>
    <text evidence="1">Localizes to mid-cell in an FtsZ-dependent manner.</text>
</comment>
<comment type="similarity">
    <text evidence="1">Belongs to the ZapD family.</text>
</comment>
<evidence type="ECO:0000255" key="1">
    <source>
        <dbReference type="HAMAP-Rule" id="MF_01092"/>
    </source>
</evidence>
<sequence>MQTQVLFEHPLNEKMRTWLRIEFLIQQLTVNLPIVDHAGALHFFRNVSELLDVFERGEVRTELLKELDRQQRKLQTWIGVPGVDQSRIEALIQQLKAAGSVLISAPRIGQFLREDRLIALVRQRLSIPGGCCSFDLPTLHIWLHLPQAQRDSQVETWIASLNPLTQALTMVLDLIRQSAPFRKQTSLNGFYQDNGGDADLLRLNLSLDSQLYPQISGHKSRFAIRFMPLDTENGQVPERLDFELACC</sequence>
<keyword id="KW-0131">Cell cycle</keyword>
<keyword id="KW-0132">Cell division</keyword>
<keyword id="KW-0963">Cytoplasm</keyword>
<keyword id="KW-1185">Reference proteome</keyword>
<keyword id="KW-0717">Septation</keyword>
<name>ZAPD_ECO55</name>
<dbReference type="EMBL" id="CU928145">
    <property type="protein sequence ID" value="CAU95984.1"/>
    <property type="molecule type" value="Genomic_DNA"/>
</dbReference>
<dbReference type="RefSeq" id="WP_001194734.1">
    <property type="nucleotide sequence ID" value="NC_011748.1"/>
</dbReference>
<dbReference type="SMR" id="B7LFX0"/>
<dbReference type="GeneID" id="93777333"/>
<dbReference type="KEGG" id="eck:EC55989_0096"/>
<dbReference type="HOGENOM" id="CLU_076303_0_0_6"/>
<dbReference type="Proteomes" id="UP000000746">
    <property type="component" value="Chromosome"/>
</dbReference>
<dbReference type="GO" id="GO:0032153">
    <property type="term" value="C:cell division site"/>
    <property type="evidence" value="ECO:0007669"/>
    <property type="project" value="TreeGrafter"/>
</dbReference>
<dbReference type="GO" id="GO:0005737">
    <property type="term" value="C:cytoplasm"/>
    <property type="evidence" value="ECO:0007669"/>
    <property type="project" value="UniProtKB-SubCell"/>
</dbReference>
<dbReference type="GO" id="GO:0000917">
    <property type="term" value="P:division septum assembly"/>
    <property type="evidence" value="ECO:0007669"/>
    <property type="project" value="UniProtKB-KW"/>
</dbReference>
<dbReference type="GO" id="GO:0043093">
    <property type="term" value="P:FtsZ-dependent cytokinesis"/>
    <property type="evidence" value="ECO:0007669"/>
    <property type="project" value="UniProtKB-UniRule"/>
</dbReference>
<dbReference type="FunFam" id="1.10.3900.10:FF:000001">
    <property type="entry name" value="Cell division protein ZapD"/>
    <property type="match status" value="1"/>
</dbReference>
<dbReference type="FunFam" id="2.60.440.10:FF:000001">
    <property type="entry name" value="Cell division protein ZapD"/>
    <property type="match status" value="1"/>
</dbReference>
<dbReference type="Gene3D" id="1.10.3900.10">
    <property type="entry name" value="YacF-like"/>
    <property type="match status" value="1"/>
</dbReference>
<dbReference type="Gene3D" id="2.60.440.10">
    <property type="entry name" value="YacF-like domains"/>
    <property type="match status" value="1"/>
</dbReference>
<dbReference type="HAMAP" id="MF_01092">
    <property type="entry name" value="ZapD"/>
    <property type="match status" value="1"/>
</dbReference>
<dbReference type="InterPro" id="IPR009777">
    <property type="entry name" value="ZapD"/>
</dbReference>
<dbReference type="InterPro" id="IPR027462">
    <property type="entry name" value="ZapD_C"/>
</dbReference>
<dbReference type="InterPro" id="IPR036268">
    <property type="entry name" value="ZapD_sf"/>
</dbReference>
<dbReference type="NCBIfam" id="NF003653">
    <property type="entry name" value="PRK05287.1-1"/>
    <property type="match status" value="1"/>
</dbReference>
<dbReference type="NCBIfam" id="NF003655">
    <property type="entry name" value="PRK05287.1-3"/>
    <property type="match status" value="1"/>
</dbReference>
<dbReference type="PANTHER" id="PTHR39455">
    <property type="entry name" value="CELL DIVISION PROTEIN ZAPD"/>
    <property type="match status" value="1"/>
</dbReference>
<dbReference type="PANTHER" id="PTHR39455:SF1">
    <property type="entry name" value="CELL DIVISION PROTEIN ZAPD"/>
    <property type="match status" value="1"/>
</dbReference>
<dbReference type="Pfam" id="PF07072">
    <property type="entry name" value="ZapD"/>
    <property type="match status" value="1"/>
</dbReference>
<dbReference type="SUPFAM" id="SSF160950">
    <property type="entry name" value="YacF-like"/>
    <property type="match status" value="1"/>
</dbReference>
<feature type="chain" id="PRO_1000149889" description="Cell division protein ZapD">
    <location>
        <begin position="1"/>
        <end position="247"/>
    </location>
</feature>
<proteinExistence type="inferred from homology"/>
<protein>
    <recommendedName>
        <fullName evidence="1">Cell division protein ZapD</fullName>
    </recommendedName>
    <alternativeName>
        <fullName evidence="1">Z ring-associated protein D</fullName>
    </alternativeName>
</protein>